<keyword id="KW-0028">Amino-acid biosynthesis</keyword>
<keyword id="KW-0963">Cytoplasm</keyword>
<keyword id="KW-0368">Histidine biosynthesis</keyword>
<keyword id="KW-0456">Lyase</keyword>
<gene>
    <name evidence="1" type="primary">hisB</name>
    <name type="ordered locus">PPA1154</name>
</gene>
<comment type="catalytic activity">
    <reaction evidence="1">
        <text>D-erythro-1-(imidazol-4-yl)glycerol 3-phosphate = 3-(imidazol-4-yl)-2-oxopropyl phosphate + H2O</text>
        <dbReference type="Rhea" id="RHEA:11040"/>
        <dbReference type="ChEBI" id="CHEBI:15377"/>
        <dbReference type="ChEBI" id="CHEBI:57766"/>
        <dbReference type="ChEBI" id="CHEBI:58278"/>
        <dbReference type="EC" id="4.2.1.19"/>
    </reaction>
</comment>
<comment type="pathway">
    <text evidence="1">Amino-acid biosynthesis; L-histidine biosynthesis; L-histidine from 5-phospho-alpha-D-ribose 1-diphosphate: step 6/9.</text>
</comment>
<comment type="subcellular location">
    <subcellularLocation>
        <location evidence="1">Cytoplasm</location>
    </subcellularLocation>
</comment>
<comment type="similarity">
    <text evidence="1">Belongs to the imidazoleglycerol-phosphate dehydratase family.</text>
</comment>
<protein>
    <recommendedName>
        <fullName evidence="1">Imidazoleglycerol-phosphate dehydratase</fullName>
        <shortName evidence="1">IGPD</shortName>
        <ecNumber evidence="1">4.2.1.19</ecNumber>
    </recommendedName>
</protein>
<name>HIS7_CUTAK</name>
<reference key="1">
    <citation type="journal article" date="2004" name="Science">
        <title>The complete genome sequence of Propionibacterium acnes, a commensal of human skin.</title>
        <authorList>
            <person name="Brueggemann H."/>
            <person name="Henne A."/>
            <person name="Hoster F."/>
            <person name="Liesegang H."/>
            <person name="Wiezer A."/>
            <person name="Strittmatter A."/>
            <person name="Hujer S."/>
            <person name="Duerre P."/>
            <person name="Gottschalk G."/>
        </authorList>
    </citation>
    <scope>NUCLEOTIDE SEQUENCE [LARGE SCALE GENOMIC DNA]</scope>
    <source>
        <strain>DSM 16379 / KPA171202</strain>
    </source>
</reference>
<dbReference type="EC" id="4.2.1.19" evidence="1"/>
<dbReference type="EMBL" id="AE017283">
    <property type="protein sequence ID" value="AAT82903.1"/>
    <property type="molecule type" value="Genomic_DNA"/>
</dbReference>
<dbReference type="RefSeq" id="WP_002513559.1">
    <property type="nucleotide sequence ID" value="NZ_CP025935.1"/>
</dbReference>
<dbReference type="SMR" id="Q6A8L3"/>
<dbReference type="EnsemblBacteria" id="AAT82903">
    <property type="protein sequence ID" value="AAT82903"/>
    <property type="gene ID" value="PPA1154"/>
</dbReference>
<dbReference type="KEGG" id="pac:PPA1154"/>
<dbReference type="eggNOG" id="COG0131">
    <property type="taxonomic scope" value="Bacteria"/>
</dbReference>
<dbReference type="HOGENOM" id="CLU_044308_3_0_11"/>
<dbReference type="UniPathway" id="UPA00031">
    <property type="reaction ID" value="UER00011"/>
</dbReference>
<dbReference type="Proteomes" id="UP000000603">
    <property type="component" value="Chromosome"/>
</dbReference>
<dbReference type="GO" id="GO:0005737">
    <property type="term" value="C:cytoplasm"/>
    <property type="evidence" value="ECO:0007669"/>
    <property type="project" value="UniProtKB-SubCell"/>
</dbReference>
<dbReference type="GO" id="GO:0004424">
    <property type="term" value="F:imidazoleglycerol-phosphate dehydratase activity"/>
    <property type="evidence" value="ECO:0007669"/>
    <property type="project" value="UniProtKB-UniRule"/>
</dbReference>
<dbReference type="GO" id="GO:0000105">
    <property type="term" value="P:L-histidine biosynthetic process"/>
    <property type="evidence" value="ECO:0007669"/>
    <property type="project" value="UniProtKB-UniRule"/>
</dbReference>
<dbReference type="CDD" id="cd07914">
    <property type="entry name" value="IGPD"/>
    <property type="match status" value="1"/>
</dbReference>
<dbReference type="FunFam" id="3.30.230.40:FF:000001">
    <property type="entry name" value="Imidazoleglycerol-phosphate dehydratase HisB"/>
    <property type="match status" value="1"/>
</dbReference>
<dbReference type="FunFam" id="3.30.230.40:FF:000003">
    <property type="entry name" value="Imidazoleglycerol-phosphate dehydratase HisB"/>
    <property type="match status" value="1"/>
</dbReference>
<dbReference type="Gene3D" id="3.30.230.40">
    <property type="entry name" value="Imidazole glycerol phosphate dehydratase, domain 1"/>
    <property type="match status" value="2"/>
</dbReference>
<dbReference type="HAMAP" id="MF_00076">
    <property type="entry name" value="HisB"/>
    <property type="match status" value="1"/>
</dbReference>
<dbReference type="InterPro" id="IPR038494">
    <property type="entry name" value="IGPD_sf"/>
</dbReference>
<dbReference type="InterPro" id="IPR000807">
    <property type="entry name" value="ImidazoleglycerolP_deHydtase"/>
</dbReference>
<dbReference type="InterPro" id="IPR020565">
    <property type="entry name" value="ImidazoleglycerP_deHydtase_CS"/>
</dbReference>
<dbReference type="InterPro" id="IPR020568">
    <property type="entry name" value="Ribosomal_Su5_D2-typ_SF"/>
</dbReference>
<dbReference type="NCBIfam" id="NF002110">
    <property type="entry name" value="PRK00951.1-6"/>
    <property type="match status" value="1"/>
</dbReference>
<dbReference type="NCBIfam" id="NF002114">
    <property type="entry name" value="PRK00951.2-4"/>
    <property type="match status" value="1"/>
</dbReference>
<dbReference type="PANTHER" id="PTHR23133:SF2">
    <property type="entry name" value="IMIDAZOLEGLYCEROL-PHOSPHATE DEHYDRATASE"/>
    <property type="match status" value="1"/>
</dbReference>
<dbReference type="PANTHER" id="PTHR23133">
    <property type="entry name" value="IMIDAZOLEGLYCEROL-PHOSPHATE DEHYDRATASE HIS7"/>
    <property type="match status" value="1"/>
</dbReference>
<dbReference type="Pfam" id="PF00475">
    <property type="entry name" value="IGPD"/>
    <property type="match status" value="1"/>
</dbReference>
<dbReference type="SUPFAM" id="SSF54211">
    <property type="entry name" value="Ribosomal protein S5 domain 2-like"/>
    <property type="match status" value="2"/>
</dbReference>
<dbReference type="PROSITE" id="PS00954">
    <property type="entry name" value="IGP_DEHYDRATASE_1"/>
    <property type="match status" value="1"/>
</dbReference>
<dbReference type="PROSITE" id="PS00955">
    <property type="entry name" value="IGP_DEHYDRATASE_2"/>
    <property type="match status" value="1"/>
</dbReference>
<feature type="chain" id="PRO_0000158152" description="Imidazoleglycerol-phosphate dehydratase">
    <location>
        <begin position="1"/>
        <end position="206"/>
    </location>
</feature>
<sequence length="206" mass="21790">MTHRRAHIYRETSESTVDVAIDLDGAGESTISTGVGFYDHMLTTLSKHSGIDMTITTTGDVEIDGHHSIEDTAIALGQALAQALGDKCGITRFGDAVVPLDEALAQCVVDVAGRPWVACSGEPEGQAYVRIGGSGVSYQGSMTYHVMHSLAFNAGLCVHLRLLAGRDPHHICEAEFKALARALRIAIAPDPRNAGRVPSTKGALNV</sequence>
<evidence type="ECO:0000255" key="1">
    <source>
        <dbReference type="HAMAP-Rule" id="MF_00076"/>
    </source>
</evidence>
<organism>
    <name type="scientific">Cutibacterium acnes (strain DSM 16379 / KPA171202)</name>
    <name type="common">Propionibacterium acnes</name>
    <dbReference type="NCBI Taxonomy" id="267747"/>
    <lineage>
        <taxon>Bacteria</taxon>
        <taxon>Bacillati</taxon>
        <taxon>Actinomycetota</taxon>
        <taxon>Actinomycetes</taxon>
        <taxon>Propionibacteriales</taxon>
        <taxon>Propionibacteriaceae</taxon>
        <taxon>Cutibacterium</taxon>
    </lineage>
</organism>
<proteinExistence type="inferred from homology"/>
<accession>Q6A8L3</accession>